<name>RECF_PSEE4</name>
<protein>
    <recommendedName>
        <fullName evidence="1">DNA replication and repair protein RecF</fullName>
    </recommendedName>
</protein>
<feature type="chain" id="PRO_1000048557" description="DNA replication and repair protein RecF">
    <location>
        <begin position="1"/>
        <end position="367"/>
    </location>
</feature>
<feature type="binding site" evidence="1">
    <location>
        <begin position="30"/>
        <end position="37"/>
    </location>
    <ligand>
        <name>ATP</name>
        <dbReference type="ChEBI" id="CHEBI:30616"/>
    </ligand>
</feature>
<dbReference type="EMBL" id="CT573326">
    <property type="protein sequence ID" value="CAK13000.1"/>
    <property type="molecule type" value="Genomic_DNA"/>
</dbReference>
<dbReference type="RefSeq" id="WP_011531461.1">
    <property type="nucleotide sequence ID" value="NC_008027.1"/>
</dbReference>
<dbReference type="SMR" id="Q1IH46"/>
<dbReference type="STRING" id="384676.PSEEN0003"/>
<dbReference type="GeneID" id="32803374"/>
<dbReference type="KEGG" id="pen:PSEEN0003"/>
<dbReference type="eggNOG" id="COG1195">
    <property type="taxonomic scope" value="Bacteria"/>
</dbReference>
<dbReference type="HOGENOM" id="CLU_040267_0_0_6"/>
<dbReference type="OrthoDB" id="9803889at2"/>
<dbReference type="Proteomes" id="UP000000658">
    <property type="component" value="Chromosome"/>
</dbReference>
<dbReference type="GO" id="GO:0005737">
    <property type="term" value="C:cytoplasm"/>
    <property type="evidence" value="ECO:0007669"/>
    <property type="project" value="UniProtKB-SubCell"/>
</dbReference>
<dbReference type="GO" id="GO:0005524">
    <property type="term" value="F:ATP binding"/>
    <property type="evidence" value="ECO:0007669"/>
    <property type="project" value="UniProtKB-UniRule"/>
</dbReference>
<dbReference type="GO" id="GO:0003697">
    <property type="term" value="F:single-stranded DNA binding"/>
    <property type="evidence" value="ECO:0007669"/>
    <property type="project" value="UniProtKB-UniRule"/>
</dbReference>
<dbReference type="GO" id="GO:0006260">
    <property type="term" value="P:DNA replication"/>
    <property type="evidence" value="ECO:0007669"/>
    <property type="project" value="UniProtKB-UniRule"/>
</dbReference>
<dbReference type="GO" id="GO:0000731">
    <property type="term" value="P:DNA synthesis involved in DNA repair"/>
    <property type="evidence" value="ECO:0007669"/>
    <property type="project" value="TreeGrafter"/>
</dbReference>
<dbReference type="GO" id="GO:0006302">
    <property type="term" value="P:double-strand break repair"/>
    <property type="evidence" value="ECO:0007669"/>
    <property type="project" value="TreeGrafter"/>
</dbReference>
<dbReference type="GO" id="GO:0009432">
    <property type="term" value="P:SOS response"/>
    <property type="evidence" value="ECO:0007669"/>
    <property type="project" value="UniProtKB-UniRule"/>
</dbReference>
<dbReference type="FunFam" id="1.20.1050.90:FF:000003">
    <property type="entry name" value="DNA replication and repair protein RecF"/>
    <property type="match status" value="1"/>
</dbReference>
<dbReference type="Gene3D" id="3.40.50.300">
    <property type="entry name" value="P-loop containing nucleotide triphosphate hydrolases"/>
    <property type="match status" value="1"/>
</dbReference>
<dbReference type="Gene3D" id="1.20.1050.90">
    <property type="entry name" value="RecF/RecN/SMC, N-terminal domain"/>
    <property type="match status" value="1"/>
</dbReference>
<dbReference type="HAMAP" id="MF_00365">
    <property type="entry name" value="RecF"/>
    <property type="match status" value="1"/>
</dbReference>
<dbReference type="InterPro" id="IPR001238">
    <property type="entry name" value="DNA-binding_RecF"/>
</dbReference>
<dbReference type="InterPro" id="IPR018078">
    <property type="entry name" value="DNA-binding_RecF_CS"/>
</dbReference>
<dbReference type="InterPro" id="IPR027417">
    <property type="entry name" value="P-loop_NTPase"/>
</dbReference>
<dbReference type="InterPro" id="IPR003395">
    <property type="entry name" value="RecF/RecN/SMC_N"/>
</dbReference>
<dbReference type="InterPro" id="IPR042174">
    <property type="entry name" value="RecF_2"/>
</dbReference>
<dbReference type="NCBIfam" id="TIGR00611">
    <property type="entry name" value="recf"/>
    <property type="match status" value="1"/>
</dbReference>
<dbReference type="PANTHER" id="PTHR32182">
    <property type="entry name" value="DNA REPLICATION AND REPAIR PROTEIN RECF"/>
    <property type="match status" value="1"/>
</dbReference>
<dbReference type="PANTHER" id="PTHR32182:SF0">
    <property type="entry name" value="DNA REPLICATION AND REPAIR PROTEIN RECF"/>
    <property type="match status" value="1"/>
</dbReference>
<dbReference type="Pfam" id="PF02463">
    <property type="entry name" value="SMC_N"/>
    <property type="match status" value="1"/>
</dbReference>
<dbReference type="SUPFAM" id="SSF52540">
    <property type="entry name" value="P-loop containing nucleoside triphosphate hydrolases"/>
    <property type="match status" value="1"/>
</dbReference>
<dbReference type="PROSITE" id="PS00617">
    <property type="entry name" value="RECF_1"/>
    <property type="match status" value="1"/>
</dbReference>
<dbReference type="PROSITE" id="PS00618">
    <property type="entry name" value="RECF_2"/>
    <property type="match status" value="1"/>
</dbReference>
<comment type="function">
    <text evidence="1">The RecF protein is involved in DNA metabolism; it is required for DNA replication and normal SOS inducibility. RecF binds preferentially to single-stranded, linear DNA. It also seems to bind ATP.</text>
</comment>
<comment type="subcellular location">
    <subcellularLocation>
        <location evidence="1">Cytoplasm</location>
    </subcellularLocation>
</comment>
<comment type="similarity">
    <text evidence="1">Belongs to the RecF family.</text>
</comment>
<evidence type="ECO:0000255" key="1">
    <source>
        <dbReference type="HAMAP-Rule" id="MF_00365"/>
    </source>
</evidence>
<organism>
    <name type="scientific">Pseudomonas entomophila (strain L48)</name>
    <dbReference type="NCBI Taxonomy" id="384676"/>
    <lineage>
        <taxon>Bacteria</taxon>
        <taxon>Pseudomonadati</taxon>
        <taxon>Pseudomonadota</taxon>
        <taxon>Gammaproteobacteria</taxon>
        <taxon>Pseudomonadales</taxon>
        <taxon>Pseudomonadaceae</taxon>
        <taxon>Pseudomonas</taxon>
    </lineage>
</organism>
<keyword id="KW-0067">ATP-binding</keyword>
<keyword id="KW-0963">Cytoplasm</keyword>
<keyword id="KW-0227">DNA damage</keyword>
<keyword id="KW-0234">DNA repair</keyword>
<keyword id="KW-0235">DNA replication</keyword>
<keyword id="KW-0238">DNA-binding</keyword>
<keyword id="KW-0547">Nucleotide-binding</keyword>
<keyword id="KW-0742">SOS response</keyword>
<sequence>MSLRRLSVTAVRNLHPVTLSPSPRINILYGANGSGKTSVLEAVHLLGLARSFRSTRLNPVIQYEQQTCTVFGQVELAEGGTSNLGVSRERQGEFTIRIDGQNARSAAQLAEMLPLQLINPDSFRLLEGAPKVRRQFLDWGVFHVEPRFMATWQRLQKALRQRNSWLRHGTLDAVSQAAWDRELCLASAEIDEYRRNYIKALKPVFERTLSELVELDGLTLSYYRGWDKDRELNEVLATSLLRDQQMGHTQAGPQRADLRLRLGANNAADILSRGQQKLVVCALRIAQGHLVSQVRRGQCIYLVDDLPSELDEQHRRALCRLLEELNCQVFITCVDHEFLREGWQTETPVALFHVEQGRITQTHDHRE</sequence>
<accession>Q1IH46</accession>
<proteinExistence type="inferred from homology"/>
<reference key="1">
    <citation type="journal article" date="2006" name="Nat. Biotechnol.">
        <title>Complete genome sequence of the entomopathogenic and metabolically versatile soil bacterium Pseudomonas entomophila.</title>
        <authorList>
            <person name="Vodovar N."/>
            <person name="Vallenet D."/>
            <person name="Cruveiller S."/>
            <person name="Rouy Z."/>
            <person name="Barbe V."/>
            <person name="Acosta C."/>
            <person name="Cattolico L."/>
            <person name="Jubin C."/>
            <person name="Lajus A."/>
            <person name="Segurens B."/>
            <person name="Vacherie B."/>
            <person name="Wincker P."/>
            <person name="Weissenbach J."/>
            <person name="Lemaitre B."/>
            <person name="Medigue C."/>
            <person name="Boccard F."/>
        </authorList>
    </citation>
    <scope>NUCLEOTIDE SEQUENCE [LARGE SCALE GENOMIC DNA]</scope>
    <source>
        <strain>L48</strain>
    </source>
</reference>
<gene>
    <name evidence="1" type="primary">recF</name>
    <name type="ordered locus">PSEEN0003</name>
</gene>